<accession>A4VI89</accession>
<reference key="1">
    <citation type="journal article" date="2008" name="Proc. Natl. Acad. Sci. U.S.A.">
        <title>Nitrogen fixation island and rhizosphere competence traits in the genome of root-associated Pseudomonas stutzeri A1501.</title>
        <authorList>
            <person name="Yan Y."/>
            <person name="Yang J."/>
            <person name="Dou Y."/>
            <person name="Chen M."/>
            <person name="Ping S."/>
            <person name="Peng J."/>
            <person name="Lu W."/>
            <person name="Zhang W."/>
            <person name="Yao Z."/>
            <person name="Li H."/>
            <person name="Liu W."/>
            <person name="He S."/>
            <person name="Geng L."/>
            <person name="Zhang X."/>
            <person name="Yang F."/>
            <person name="Yu H."/>
            <person name="Zhan Y."/>
            <person name="Li D."/>
            <person name="Lin Z."/>
            <person name="Wang Y."/>
            <person name="Elmerich C."/>
            <person name="Lin M."/>
            <person name="Jin Q."/>
        </authorList>
    </citation>
    <scope>NUCLEOTIDE SEQUENCE [LARGE SCALE GENOMIC DNA]</scope>
    <source>
        <strain>A1501</strain>
    </source>
</reference>
<name>RF3_STUS1</name>
<gene>
    <name evidence="1" type="primary">prfC</name>
    <name type="ordered locus">PST_0993</name>
</gene>
<dbReference type="EMBL" id="CP000304">
    <property type="protein sequence ID" value="ABP78690.1"/>
    <property type="molecule type" value="Genomic_DNA"/>
</dbReference>
<dbReference type="RefSeq" id="WP_011912181.1">
    <property type="nucleotide sequence ID" value="NC_009434.1"/>
</dbReference>
<dbReference type="SMR" id="A4VI89"/>
<dbReference type="KEGG" id="psa:PST_0993"/>
<dbReference type="eggNOG" id="COG4108">
    <property type="taxonomic scope" value="Bacteria"/>
</dbReference>
<dbReference type="HOGENOM" id="CLU_002794_2_1_6"/>
<dbReference type="Proteomes" id="UP000000233">
    <property type="component" value="Chromosome"/>
</dbReference>
<dbReference type="GO" id="GO:0005829">
    <property type="term" value="C:cytosol"/>
    <property type="evidence" value="ECO:0007669"/>
    <property type="project" value="TreeGrafter"/>
</dbReference>
<dbReference type="GO" id="GO:0005525">
    <property type="term" value="F:GTP binding"/>
    <property type="evidence" value="ECO:0007669"/>
    <property type="project" value="UniProtKB-UniRule"/>
</dbReference>
<dbReference type="GO" id="GO:0003924">
    <property type="term" value="F:GTPase activity"/>
    <property type="evidence" value="ECO:0007669"/>
    <property type="project" value="InterPro"/>
</dbReference>
<dbReference type="GO" id="GO:0097216">
    <property type="term" value="F:guanosine tetraphosphate binding"/>
    <property type="evidence" value="ECO:0007669"/>
    <property type="project" value="UniProtKB-ARBA"/>
</dbReference>
<dbReference type="GO" id="GO:0016150">
    <property type="term" value="F:translation release factor activity, codon nonspecific"/>
    <property type="evidence" value="ECO:0007669"/>
    <property type="project" value="TreeGrafter"/>
</dbReference>
<dbReference type="GO" id="GO:0016149">
    <property type="term" value="F:translation release factor activity, codon specific"/>
    <property type="evidence" value="ECO:0007669"/>
    <property type="project" value="UniProtKB-UniRule"/>
</dbReference>
<dbReference type="GO" id="GO:0006449">
    <property type="term" value="P:regulation of translational termination"/>
    <property type="evidence" value="ECO:0007669"/>
    <property type="project" value="UniProtKB-UniRule"/>
</dbReference>
<dbReference type="CDD" id="cd04169">
    <property type="entry name" value="RF3"/>
    <property type="match status" value="1"/>
</dbReference>
<dbReference type="CDD" id="cd03689">
    <property type="entry name" value="RF3_II"/>
    <property type="match status" value="1"/>
</dbReference>
<dbReference type="CDD" id="cd16259">
    <property type="entry name" value="RF3_III"/>
    <property type="match status" value="1"/>
</dbReference>
<dbReference type="FunFam" id="2.40.30.10:FF:000040">
    <property type="entry name" value="Peptide chain release factor 3"/>
    <property type="match status" value="1"/>
</dbReference>
<dbReference type="FunFam" id="3.30.70.3280:FF:000001">
    <property type="entry name" value="Peptide chain release factor 3"/>
    <property type="match status" value="1"/>
</dbReference>
<dbReference type="FunFam" id="3.40.50.300:FF:000542">
    <property type="entry name" value="Peptide chain release factor 3"/>
    <property type="match status" value="1"/>
</dbReference>
<dbReference type="Gene3D" id="3.40.50.300">
    <property type="entry name" value="P-loop containing nucleotide triphosphate hydrolases"/>
    <property type="match status" value="2"/>
</dbReference>
<dbReference type="Gene3D" id="3.30.70.3280">
    <property type="entry name" value="Peptide chain release factor 3, domain III"/>
    <property type="match status" value="1"/>
</dbReference>
<dbReference type="HAMAP" id="MF_00072">
    <property type="entry name" value="Rel_fac_3"/>
    <property type="match status" value="1"/>
</dbReference>
<dbReference type="InterPro" id="IPR053905">
    <property type="entry name" value="EF-G-like_DII"/>
</dbReference>
<dbReference type="InterPro" id="IPR035647">
    <property type="entry name" value="EFG_III/V"/>
</dbReference>
<dbReference type="InterPro" id="IPR031157">
    <property type="entry name" value="G_TR_CS"/>
</dbReference>
<dbReference type="InterPro" id="IPR027417">
    <property type="entry name" value="P-loop_NTPase"/>
</dbReference>
<dbReference type="InterPro" id="IPR004548">
    <property type="entry name" value="PrfC"/>
</dbReference>
<dbReference type="InterPro" id="IPR032090">
    <property type="entry name" value="RF3_C"/>
</dbReference>
<dbReference type="InterPro" id="IPR038467">
    <property type="entry name" value="RF3_dom_3_sf"/>
</dbReference>
<dbReference type="InterPro" id="IPR041732">
    <property type="entry name" value="RF3_GTP-bd"/>
</dbReference>
<dbReference type="InterPro" id="IPR005225">
    <property type="entry name" value="Small_GTP-bd"/>
</dbReference>
<dbReference type="InterPro" id="IPR000795">
    <property type="entry name" value="T_Tr_GTP-bd_dom"/>
</dbReference>
<dbReference type="InterPro" id="IPR009000">
    <property type="entry name" value="Transl_B-barrel_sf"/>
</dbReference>
<dbReference type="NCBIfam" id="TIGR00503">
    <property type="entry name" value="prfC"/>
    <property type="match status" value="1"/>
</dbReference>
<dbReference type="NCBIfam" id="NF001964">
    <property type="entry name" value="PRK00741.1"/>
    <property type="match status" value="1"/>
</dbReference>
<dbReference type="NCBIfam" id="TIGR00231">
    <property type="entry name" value="small_GTP"/>
    <property type="match status" value="1"/>
</dbReference>
<dbReference type="PANTHER" id="PTHR43556">
    <property type="entry name" value="PEPTIDE CHAIN RELEASE FACTOR RF3"/>
    <property type="match status" value="1"/>
</dbReference>
<dbReference type="PANTHER" id="PTHR43556:SF2">
    <property type="entry name" value="PEPTIDE CHAIN RELEASE FACTOR RF3"/>
    <property type="match status" value="1"/>
</dbReference>
<dbReference type="Pfam" id="PF22042">
    <property type="entry name" value="EF-G_D2"/>
    <property type="match status" value="1"/>
</dbReference>
<dbReference type="Pfam" id="PF00009">
    <property type="entry name" value="GTP_EFTU"/>
    <property type="match status" value="1"/>
</dbReference>
<dbReference type="Pfam" id="PF16658">
    <property type="entry name" value="RF3_C"/>
    <property type="match status" value="1"/>
</dbReference>
<dbReference type="PRINTS" id="PR00315">
    <property type="entry name" value="ELONGATNFCT"/>
</dbReference>
<dbReference type="SUPFAM" id="SSF54980">
    <property type="entry name" value="EF-G C-terminal domain-like"/>
    <property type="match status" value="1"/>
</dbReference>
<dbReference type="SUPFAM" id="SSF52540">
    <property type="entry name" value="P-loop containing nucleoside triphosphate hydrolases"/>
    <property type="match status" value="1"/>
</dbReference>
<dbReference type="SUPFAM" id="SSF50447">
    <property type="entry name" value="Translation proteins"/>
    <property type="match status" value="1"/>
</dbReference>
<dbReference type="PROSITE" id="PS00301">
    <property type="entry name" value="G_TR_1"/>
    <property type="match status" value="1"/>
</dbReference>
<dbReference type="PROSITE" id="PS51722">
    <property type="entry name" value="G_TR_2"/>
    <property type="match status" value="1"/>
</dbReference>
<organism>
    <name type="scientific">Stutzerimonas stutzeri (strain A1501)</name>
    <name type="common">Pseudomonas stutzeri</name>
    <dbReference type="NCBI Taxonomy" id="379731"/>
    <lineage>
        <taxon>Bacteria</taxon>
        <taxon>Pseudomonadati</taxon>
        <taxon>Pseudomonadota</taxon>
        <taxon>Gammaproteobacteria</taxon>
        <taxon>Pseudomonadales</taxon>
        <taxon>Pseudomonadaceae</taxon>
        <taxon>Stutzerimonas</taxon>
    </lineage>
</organism>
<feature type="chain" id="PRO_1000023671" description="Peptide chain release factor 3">
    <location>
        <begin position="1"/>
        <end position="527"/>
    </location>
</feature>
<feature type="domain" description="tr-type G">
    <location>
        <begin position="9"/>
        <end position="277"/>
    </location>
</feature>
<feature type="binding site" evidence="1">
    <location>
        <begin position="18"/>
        <end position="25"/>
    </location>
    <ligand>
        <name>GTP</name>
        <dbReference type="ChEBI" id="CHEBI:37565"/>
    </ligand>
</feature>
<feature type="binding site" evidence="1">
    <location>
        <begin position="86"/>
        <end position="90"/>
    </location>
    <ligand>
        <name>GTP</name>
        <dbReference type="ChEBI" id="CHEBI:37565"/>
    </ligand>
</feature>
<feature type="binding site" evidence="1">
    <location>
        <begin position="140"/>
        <end position="143"/>
    </location>
    <ligand>
        <name>GTP</name>
        <dbReference type="ChEBI" id="CHEBI:37565"/>
    </ligand>
</feature>
<keyword id="KW-0963">Cytoplasm</keyword>
<keyword id="KW-0342">GTP-binding</keyword>
<keyword id="KW-0547">Nucleotide-binding</keyword>
<keyword id="KW-0648">Protein biosynthesis</keyword>
<keyword id="KW-1185">Reference proteome</keyword>
<proteinExistence type="inferred from homology"/>
<comment type="function">
    <text evidence="1">Increases the formation of ribosomal termination complexes and stimulates activities of RF-1 and RF-2. It binds guanine nucleotides and has strong preference for UGA stop codons. It may interact directly with the ribosome. The stimulation of RF-1 and RF-2 is significantly reduced by GTP and GDP, but not by GMP.</text>
</comment>
<comment type="subcellular location">
    <subcellularLocation>
        <location evidence="1">Cytoplasm</location>
    </subcellularLocation>
</comment>
<comment type="similarity">
    <text evidence="1">Belongs to the TRAFAC class translation factor GTPase superfamily. Classic translation factor GTPase family. PrfC subfamily.</text>
</comment>
<protein>
    <recommendedName>
        <fullName evidence="1">Peptide chain release factor 3</fullName>
        <shortName evidence="1">RF-3</shortName>
    </recommendedName>
</protein>
<evidence type="ECO:0000255" key="1">
    <source>
        <dbReference type="HAMAP-Rule" id="MF_00072"/>
    </source>
</evidence>
<sequence>MTTQAAEVAKRRTFAIISHPDAGKTTITEKLLLMGKAIAVAGTVKSRKSDRHATSDWMEMEKQRGISITTSVMQFPYREHMINLLDTPGHEDFSEDTYRTLTAVDSALMVLDGGKGVEPRTIALMDVCRLRDTPIVSFINKLDRDIRDPIELLDEIEAVLKIKAAPITWPIGCYRDFKGVYHLAEDRIIVFVPGHGHERIETRVIEKLDSDEARAHLGDMYDDFVEQLELVQGACHEFDKDAFLRGEMTPVFFGTALGNFGVDHVLDAVVDWAPKPLARVANERTVEPAEEKFTGFVFKIQANMDPKHRDRIAFMRICSGKYEKGMKMRHVRIKKDLKIADALTFFSSEREMLEEAWAGDIIGLHNHGTIQIGDTFTEGEVLGFTGIPHFAPELFRRVRLKDPLKSKQLRQGLQELAEEGATQVFFPERNNDIILGAVGVLQFDVVASRLKEEYKVECAYEAINVWSARWIECSDEKKLKEFKDKAYENLAVDGGGHLTYLAPTRVNLSLMEERWPEVKFRATREHH</sequence>